<keyword id="KW-0686">Riboflavin biosynthesis</keyword>
<keyword id="KW-0808">Transferase</keyword>
<evidence type="ECO:0000255" key="1">
    <source>
        <dbReference type="HAMAP-Rule" id="MF_00178"/>
    </source>
</evidence>
<accession>B9MPC6</accession>
<protein>
    <recommendedName>
        <fullName evidence="1">6,7-dimethyl-8-ribityllumazine synthase</fullName>
        <shortName evidence="1">DMRL synthase</shortName>
        <shortName evidence="1">LS</shortName>
        <shortName evidence="1">Lumazine synthase</shortName>
        <ecNumber evidence="1">2.5.1.78</ecNumber>
    </recommendedName>
</protein>
<comment type="function">
    <text evidence="1">Catalyzes the formation of 6,7-dimethyl-8-ribityllumazine by condensation of 5-amino-6-(D-ribitylamino)uracil with 3,4-dihydroxy-2-butanone 4-phosphate. This is the penultimate step in the biosynthesis of riboflavin.</text>
</comment>
<comment type="catalytic activity">
    <reaction evidence="1">
        <text>(2S)-2-hydroxy-3-oxobutyl phosphate + 5-amino-6-(D-ribitylamino)uracil = 6,7-dimethyl-8-(1-D-ribityl)lumazine + phosphate + 2 H2O + H(+)</text>
        <dbReference type="Rhea" id="RHEA:26152"/>
        <dbReference type="ChEBI" id="CHEBI:15377"/>
        <dbReference type="ChEBI" id="CHEBI:15378"/>
        <dbReference type="ChEBI" id="CHEBI:15934"/>
        <dbReference type="ChEBI" id="CHEBI:43474"/>
        <dbReference type="ChEBI" id="CHEBI:58201"/>
        <dbReference type="ChEBI" id="CHEBI:58830"/>
        <dbReference type="EC" id="2.5.1.78"/>
    </reaction>
</comment>
<comment type="pathway">
    <text evidence="1">Cofactor biosynthesis; riboflavin biosynthesis; riboflavin from 2-hydroxy-3-oxobutyl phosphate and 5-amino-6-(D-ribitylamino)uracil: step 1/2.</text>
</comment>
<comment type="similarity">
    <text evidence="1">Belongs to the DMRL synthase family.</text>
</comment>
<sequence length="155" mass="16845">MRTFEGSFCGKDLKFAIVISRFNSFITDELLKGCLDGLKRHEVDSENIDVYYVPGAFEIPLVCKKLAKSKKYNAIIALGAVIRGSTPHFEYVSAEVSKGIANVSLEQEVPVIFGVLTCDTVDQAIERAGTKAGNKGFDAAMSALEMANLMKNISS</sequence>
<organism>
    <name type="scientific">Caldicellulosiruptor bescii (strain ATCC BAA-1888 / DSM 6725 / KCTC 15123 / Z-1320)</name>
    <name type="common">Anaerocellum thermophilum</name>
    <dbReference type="NCBI Taxonomy" id="521460"/>
    <lineage>
        <taxon>Bacteria</taxon>
        <taxon>Bacillati</taxon>
        <taxon>Bacillota</taxon>
        <taxon>Bacillota incertae sedis</taxon>
        <taxon>Caldicellulosiruptorales</taxon>
        <taxon>Caldicellulosiruptoraceae</taxon>
        <taxon>Caldicellulosiruptor</taxon>
    </lineage>
</organism>
<reference key="1">
    <citation type="submission" date="2009-01" db="EMBL/GenBank/DDBJ databases">
        <title>Complete sequence of chromosome of Caldicellulosiruptor becscii DSM 6725.</title>
        <authorList>
            <person name="Lucas S."/>
            <person name="Copeland A."/>
            <person name="Lapidus A."/>
            <person name="Glavina del Rio T."/>
            <person name="Tice H."/>
            <person name="Bruce D."/>
            <person name="Goodwin L."/>
            <person name="Pitluck S."/>
            <person name="Sims D."/>
            <person name="Meincke L."/>
            <person name="Brettin T."/>
            <person name="Detter J.C."/>
            <person name="Han C."/>
            <person name="Larimer F."/>
            <person name="Land M."/>
            <person name="Hauser L."/>
            <person name="Kyrpides N."/>
            <person name="Ovchinnikova G."/>
            <person name="Kataeva I."/>
            <person name="Adams M.W.W."/>
        </authorList>
    </citation>
    <scope>NUCLEOTIDE SEQUENCE [LARGE SCALE GENOMIC DNA]</scope>
    <source>
        <strain>ATCC BAA-1888 / DSM 6725 / KCTC 15123 / Z-1320</strain>
    </source>
</reference>
<name>RISB_CALBD</name>
<proteinExistence type="inferred from homology"/>
<gene>
    <name evidence="1" type="primary">ribH</name>
    <name type="ordered locus">Athe_0561</name>
</gene>
<feature type="chain" id="PRO_1000195451" description="6,7-dimethyl-8-ribityllumazine synthase">
    <location>
        <begin position="1"/>
        <end position="155"/>
    </location>
</feature>
<feature type="active site" description="Proton donor" evidence="1">
    <location>
        <position position="88"/>
    </location>
</feature>
<feature type="binding site" evidence="1">
    <location>
        <position position="22"/>
    </location>
    <ligand>
        <name>5-amino-6-(D-ribitylamino)uracil</name>
        <dbReference type="ChEBI" id="CHEBI:15934"/>
    </ligand>
</feature>
<feature type="binding site" evidence="1">
    <location>
        <begin position="56"/>
        <end position="58"/>
    </location>
    <ligand>
        <name>5-amino-6-(D-ribitylamino)uracil</name>
        <dbReference type="ChEBI" id="CHEBI:15934"/>
    </ligand>
</feature>
<feature type="binding site" evidence="1">
    <location>
        <begin position="80"/>
        <end position="82"/>
    </location>
    <ligand>
        <name>5-amino-6-(D-ribitylamino)uracil</name>
        <dbReference type="ChEBI" id="CHEBI:15934"/>
    </ligand>
</feature>
<feature type="binding site" evidence="1">
    <location>
        <begin position="85"/>
        <end position="86"/>
    </location>
    <ligand>
        <name>(2S)-2-hydroxy-3-oxobutyl phosphate</name>
        <dbReference type="ChEBI" id="CHEBI:58830"/>
    </ligand>
</feature>
<feature type="binding site" evidence="1">
    <location>
        <position position="113"/>
    </location>
    <ligand>
        <name>5-amino-6-(D-ribitylamino)uracil</name>
        <dbReference type="ChEBI" id="CHEBI:15934"/>
    </ligand>
</feature>
<feature type="binding site" evidence="1">
    <location>
        <position position="127"/>
    </location>
    <ligand>
        <name>(2S)-2-hydroxy-3-oxobutyl phosphate</name>
        <dbReference type="ChEBI" id="CHEBI:58830"/>
    </ligand>
</feature>
<dbReference type="EC" id="2.5.1.78" evidence="1"/>
<dbReference type="EMBL" id="CP001393">
    <property type="protein sequence ID" value="ACM59687.1"/>
    <property type="molecule type" value="Genomic_DNA"/>
</dbReference>
<dbReference type="RefSeq" id="WP_015907141.1">
    <property type="nucleotide sequence ID" value="NC_012034.1"/>
</dbReference>
<dbReference type="SMR" id="B9MPC6"/>
<dbReference type="STRING" id="521460.Athe_0561"/>
<dbReference type="GeneID" id="31771916"/>
<dbReference type="KEGG" id="ate:Athe_0561"/>
<dbReference type="eggNOG" id="COG0054">
    <property type="taxonomic scope" value="Bacteria"/>
</dbReference>
<dbReference type="HOGENOM" id="CLU_089358_1_1_9"/>
<dbReference type="UniPathway" id="UPA00275">
    <property type="reaction ID" value="UER00404"/>
</dbReference>
<dbReference type="Proteomes" id="UP000007723">
    <property type="component" value="Chromosome"/>
</dbReference>
<dbReference type="GO" id="GO:0005829">
    <property type="term" value="C:cytosol"/>
    <property type="evidence" value="ECO:0007669"/>
    <property type="project" value="TreeGrafter"/>
</dbReference>
<dbReference type="GO" id="GO:0009349">
    <property type="term" value="C:riboflavin synthase complex"/>
    <property type="evidence" value="ECO:0007669"/>
    <property type="project" value="InterPro"/>
</dbReference>
<dbReference type="GO" id="GO:0000906">
    <property type="term" value="F:6,7-dimethyl-8-ribityllumazine synthase activity"/>
    <property type="evidence" value="ECO:0007669"/>
    <property type="project" value="UniProtKB-UniRule"/>
</dbReference>
<dbReference type="GO" id="GO:0009231">
    <property type="term" value="P:riboflavin biosynthetic process"/>
    <property type="evidence" value="ECO:0007669"/>
    <property type="project" value="UniProtKB-UniRule"/>
</dbReference>
<dbReference type="CDD" id="cd09209">
    <property type="entry name" value="Lumazine_synthase-I"/>
    <property type="match status" value="1"/>
</dbReference>
<dbReference type="FunFam" id="3.40.50.960:FF:000001">
    <property type="entry name" value="6,7-dimethyl-8-ribityllumazine synthase"/>
    <property type="match status" value="1"/>
</dbReference>
<dbReference type="Gene3D" id="3.40.50.960">
    <property type="entry name" value="Lumazine/riboflavin synthase"/>
    <property type="match status" value="1"/>
</dbReference>
<dbReference type="HAMAP" id="MF_00178">
    <property type="entry name" value="Lumazine_synth"/>
    <property type="match status" value="1"/>
</dbReference>
<dbReference type="InterPro" id="IPR034964">
    <property type="entry name" value="LS"/>
</dbReference>
<dbReference type="InterPro" id="IPR002180">
    <property type="entry name" value="LS/RS"/>
</dbReference>
<dbReference type="InterPro" id="IPR036467">
    <property type="entry name" value="LS/RS_sf"/>
</dbReference>
<dbReference type="NCBIfam" id="TIGR00114">
    <property type="entry name" value="lumazine-synth"/>
    <property type="match status" value="1"/>
</dbReference>
<dbReference type="NCBIfam" id="NF000812">
    <property type="entry name" value="PRK00061.1-4"/>
    <property type="match status" value="1"/>
</dbReference>
<dbReference type="PANTHER" id="PTHR21058:SF0">
    <property type="entry name" value="6,7-DIMETHYL-8-RIBITYLLUMAZINE SYNTHASE"/>
    <property type="match status" value="1"/>
</dbReference>
<dbReference type="PANTHER" id="PTHR21058">
    <property type="entry name" value="6,7-DIMETHYL-8-RIBITYLLUMAZINE SYNTHASE DMRL SYNTHASE LUMAZINE SYNTHASE"/>
    <property type="match status" value="1"/>
</dbReference>
<dbReference type="Pfam" id="PF00885">
    <property type="entry name" value="DMRL_synthase"/>
    <property type="match status" value="1"/>
</dbReference>
<dbReference type="SUPFAM" id="SSF52121">
    <property type="entry name" value="Lumazine synthase"/>
    <property type="match status" value="1"/>
</dbReference>